<comment type="function">
    <text evidence="1">Probably involved in tryptophan uptake.</text>
</comment>
<comment type="subcellular location">
    <subcellularLocation>
        <location evidence="3">Cell membrane</location>
        <topology evidence="3">Multi-pass membrane protein</topology>
    </subcellularLocation>
</comment>
<comment type="similarity">
    <text evidence="3">Belongs to the vitamin uptake transporter (VUT/ECF) (TC 2.A.88) family. TrpP subfamily.</text>
</comment>
<evidence type="ECO:0000250" key="1"/>
<evidence type="ECO:0000255" key="2"/>
<evidence type="ECO:0000305" key="3"/>
<dbReference type="EMBL" id="BA000016">
    <property type="protein sequence ID" value="BAB81004.1"/>
    <property type="molecule type" value="Genomic_DNA"/>
</dbReference>
<dbReference type="RefSeq" id="WP_011010373.1">
    <property type="nucleotide sequence ID" value="NC_003366.1"/>
</dbReference>
<dbReference type="STRING" id="195102.gene:10490561"/>
<dbReference type="KEGG" id="cpe:CPE1298"/>
<dbReference type="HOGENOM" id="CLU_126994_0_0_9"/>
<dbReference type="Proteomes" id="UP000000818">
    <property type="component" value="Chromosome"/>
</dbReference>
<dbReference type="GO" id="GO:0005886">
    <property type="term" value="C:plasma membrane"/>
    <property type="evidence" value="ECO:0007669"/>
    <property type="project" value="UniProtKB-SubCell"/>
</dbReference>
<dbReference type="GO" id="GO:0006865">
    <property type="term" value="P:amino acid transport"/>
    <property type="evidence" value="ECO:0007669"/>
    <property type="project" value="UniProtKB-KW"/>
</dbReference>
<dbReference type="InterPro" id="IPR031360">
    <property type="entry name" value="TrpP"/>
</dbReference>
<dbReference type="Pfam" id="PF17099">
    <property type="entry name" value="TrpP"/>
    <property type="match status" value="1"/>
</dbReference>
<protein>
    <recommendedName>
        <fullName>Probable tryptophan transport protein</fullName>
    </recommendedName>
</protein>
<proteinExistence type="inferred from homology"/>
<sequence>MNVRNNTKLITINALLLAIGVILHQITPVLGLPMQPDFAITMLFIIIILNDNFKITMVSGTLMGIFTAMTTKFPGGQLPNVVDKIFTALIVFLFIALIKKSNILGRLSVEKRNNILMAIVLPLGTLVSGILFLGTAKIIVGLPASFSILFLTVVVPSVALNTVIGLVLYRIVEKSLRRASLL</sequence>
<accession>P58725</accession>
<gene>
    <name type="primary">trpP</name>
    <name type="ordered locus">CPE1298</name>
</gene>
<keyword id="KW-0029">Amino-acid transport</keyword>
<keyword id="KW-1003">Cell membrane</keyword>
<keyword id="KW-0472">Membrane</keyword>
<keyword id="KW-1185">Reference proteome</keyword>
<keyword id="KW-0812">Transmembrane</keyword>
<keyword id="KW-1133">Transmembrane helix</keyword>
<keyword id="KW-0813">Transport</keyword>
<name>TRPP_CLOPE</name>
<reference key="1">
    <citation type="journal article" date="2002" name="Proc. Natl. Acad. Sci. U.S.A.">
        <title>Complete genome sequence of Clostridium perfringens, an anaerobic flesh-eater.</title>
        <authorList>
            <person name="Shimizu T."/>
            <person name="Ohtani K."/>
            <person name="Hirakawa H."/>
            <person name="Ohshima K."/>
            <person name="Yamashita A."/>
            <person name="Shiba T."/>
            <person name="Ogasawara N."/>
            <person name="Hattori M."/>
            <person name="Kuhara S."/>
            <person name="Hayashi H."/>
        </authorList>
    </citation>
    <scope>NUCLEOTIDE SEQUENCE [LARGE SCALE GENOMIC DNA]</scope>
    <source>
        <strain>13 / Type A</strain>
    </source>
</reference>
<feature type="chain" id="PRO_0000109852" description="Probable tryptophan transport protein">
    <location>
        <begin position="1"/>
        <end position="182"/>
    </location>
</feature>
<feature type="transmembrane region" description="Helical" evidence="2">
    <location>
        <begin position="10"/>
        <end position="32"/>
    </location>
</feature>
<feature type="transmembrane region" description="Helical" evidence="2">
    <location>
        <begin position="55"/>
        <end position="75"/>
    </location>
</feature>
<feature type="transmembrane region" description="Helical" evidence="2">
    <location>
        <begin position="119"/>
        <end position="141"/>
    </location>
</feature>
<feature type="transmembrane region" description="Helical" evidence="2">
    <location>
        <begin position="146"/>
        <end position="168"/>
    </location>
</feature>
<organism>
    <name type="scientific">Clostridium perfringens (strain 13 / Type A)</name>
    <dbReference type="NCBI Taxonomy" id="195102"/>
    <lineage>
        <taxon>Bacteria</taxon>
        <taxon>Bacillati</taxon>
        <taxon>Bacillota</taxon>
        <taxon>Clostridia</taxon>
        <taxon>Eubacteriales</taxon>
        <taxon>Clostridiaceae</taxon>
        <taxon>Clostridium</taxon>
    </lineage>
</organism>